<keyword id="KW-0997">Cell inner membrane</keyword>
<keyword id="KW-1003">Cell membrane</keyword>
<keyword id="KW-0472">Membrane</keyword>
<keyword id="KW-0520">NAD</keyword>
<keyword id="KW-0874">Quinone</keyword>
<keyword id="KW-1185">Reference proteome</keyword>
<keyword id="KW-1278">Translocase</keyword>
<keyword id="KW-0812">Transmembrane</keyword>
<keyword id="KW-1133">Transmembrane helix</keyword>
<keyword id="KW-0830">Ubiquinone</keyword>
<protein>
    <recommendedName>
        <fullName evidence="1">NADH-quinone oxidoreductase subunit H</fullName>
        <ecNumber evidence="1">7.1.1.-</ecNumber>
    </recommendedName>
    <alternativeName>
        <fullName evidence="1">NADH dehydrogenase I subunit H</fullName>
    </alternativeName>
    <alternativeName>
        <fullName evidence="1">NDH-1 subunit H</fullName>
    </alternativeName>
</protein>
<proteinExistence type="inferred from homology"/>
<feature type="chain" id="PRO_0000244923" description="NADH-quinone oxidoreductase subunit H">
    <location>
        <begin position="1"/>
        <end position="316"/>
    </location>
</feature>
<feature type="transmembrane region" description="Helical" evidence="1">
    <location>
        <begin position="6"/>
        <end position="26"/>
    </location>
</feature>
<feature type="transmembrane region" description="Helical" evidence="1">
    <location>
        <begin position="74"/>
        <end position="94"/>
    </location>
</feature>
<feature type="transmembrane region" description="Helical" evidence="1">
    <location>
        <begin position="98"/>
        <end position="118"/>
    </location>
</feature>
<feature type="transmembrane region" description="Helical" evidence="1">
    <location>
        <begin position="145"/>
        <end position="165"/>
    </location>
</feature>
<feature type="transmembrane region" description="Helical" evidence="1">
    <location>
        <begin position="177"/>
        <end position="197"/>
    </location>
</feature>
<feature type="transmembrane region" description="Helical" evidence="1">
    <location>
        <begin position="233"/>
        <end position="253"/>
    </location>
</feature>
<feature type="transmembrane region" description="Helical" evidence="1">
    <location>
        <begin position="256"/>
        <end position="276"/>
    </location>
</feature>
<feature type="transmembrane region" description="Helical" evidence="1">
    <location>
        <begin position="296"/>
        <end position="316"/>
    </location>
</feature>
<evidence type="ECO:0000255" key="1">
    <source>
        <dbReference type="HAMAP-Rule" id="MF_01350"/>
    </source>
</evidence>
<sequence>MTVGSPAVVIGILLSTVIVAAWLIWVERRMIGIWQDRLGPNRVGPLGLGQVVADMVKIFFKEDWIPPFADKPVFVIAPAIVMVTMLLGFVVVPFAPGVGVIDFNFGLLYFFALSSLAVYSQVLAGYASNNKYSLLGSLRAAAQSISYEVFMGLAAMGVVMLAGSFNLREIVEAQKDGWYVLPQFAGFLAFLVAAVAECHRAPFDLPEAEQEITGGFHTEYSGMKFGMFFVGEYLGITLNSAILVTLFFGGWLGPAFLPPLAWFILKTLVFILFFILLRAALARPRYDQLMSFGWKVMLPLTLANIVVTGAVGLSVP</sequence>
<dbReference type="EC" id="7.1.1.-" evidence="1"/>
<dbReference type="EMBL" id="AE017282">
    <property type="protein sequence ID" value="AAU92581.1"/>
    <property type="molecule type" value="Genomic_DNA"/>
</dbReference>
<dbReference type="RefSeq" id="WP_010960633.1">
    <property type="nucleotide sequence ID" value="NC_002977.6"/>
</dbReference>
<dbReference type="SMR" id="Q608Y3"/>
<dbReference type="STRING" id="243233.MCA1353"/>
<dbReference type="GeneID" id="88223631"/>
<dbReference type="KEGG" id="mca:MCA1353"/>
<dbReference type="eggNOG" id="COG1005">
    <property type="taxonomic scope" value="Bacteria"/>
</dbReference>
<dbReference type="HOGENOM" id="CLU_015134_0_1_6"/>
<dbReference type="Proteomes" id="UP000006821">
    <property type="component" value="Chromosome"/>
</dbReference>
<dbReference type="GO" id="GO:0005886">
    <property type="term" value="C:plasma membrane"/>
    <property type="evidence" value="ECO:0007669"/>
    <property type="project" value="UniProtKB-SubCell"/>
</dbReference>
<dbReference type="GO" id="GO:0003954">
    <property type="term" value="F:NADH dehydrogenase activity"/>
    <property type="evidence" value="ECO:0007669"/>
    <property type="project" value="TreeGrafter"/>
</dbReference>
<dbReference type="GO" id="GO:0016655">
    <property type="term" value="F:oxidoreductase activity, acting on NAD(P)H, quinone or similar compound as acceptor"/>
    <property type="evidence" value="ECO:0007669"/>
    <property type="project" value="UniProtKB-UniRule"/>
</dbReference>
<dbReference type="GO" id="GO:0048038">
    <property type="term" value="F:quinone binding"/>
    <property type="evidence" value="ECO:0007669"/>
    <property type="project" value="UniProtKB-KW"/>
</dbReference>
<dbReference type="GO" id="GO:0009060">
    <property type="term" value="P:aerobic respiration"/>
    <property type="evidence" value="ECO:0007669"/>
    <property type="project" value="TreeGrafter"/>
</dbReference>
<dbReference type="HAMAP" id="MF_01350">
    <property type="entry name" value="NDH1_NuoH"/>
    <property type="match status" value="1"/>
</dbReference>
<dbReference type="InterPro" id="IPR001694">
    <property type="entry name" value="NADH_UbQ_OxRdtase_su1/FPO"/>
</dbReference>
<dbReference type="InterPro" id="IPR018086">
    <property type="entry name" value="NADH_UbQ_OxRdtase_su1_CS"/>
</dbReference>
<dbReference type="NCBIfam" id="NF004740">
    <property type="entry name" value="PRK06076.1-1"/>
    <property type="match status" value="1"/>
</dbReference>
<dbReference type="NCBIfam" id="NF004741">
    <property type="entry name" value="PRK06076.1-2"/>
    <property type="match status" value="1"/>
</dbReference>
<dbReference type="PANTHER" id="PTHR11432">
    <property type="entry name" value="NADH DEHYDROGENASE SUBUNIT 1"/>
    <property type="match status" value="1"/>
</dbReference>
<dbReference type="PANTHER" id="PTHR11432:SF3">
    <property type="entry name" value="NADH-UBIQUINONE OXIDOREDUCTASE CHAIN 1"/>
    <property type="match status" value="1"/>
</dbReference>
<dbReference type="Pfam" id="PF00146">
    <property type="entry name" value="NADHdh"/>
    <property type="match status" value="1"/>
</dbReference>
<dbReference type="PROSITE" id="PS00667">
    <property type="entry name" value="COMPLEX1_ND1_1"/>
    <property type="match status" value="1"/>
</dbReference>
<dbReference type="PROSITE" id="PS00668">
    <property type="entry name" value="COMPLEX1_ND1_2"/>
    <property type="match status" value="1"/>
</dbReference>
<comment type="function">
    <text evidence="1">NDH-1 shuttles electrons from NADH, via FMN and iron-sulfur (Fe-S) centers, to quinones in the respiratory chain. The immediate electron acceptor for the enzyme in this species is believed to be ubiquinone. Couples the redox reaction to proton translocation (for every two electrons transferred, four hydrogen ions are translocated across the cytoplasmic membrane), and thus conserves the redox energy in a proton gradient. This subunit may bind ubiquinone.</text>
</comment>
<comment type="catalytic activity">
    <reaction evidence="1">
        <text>a quinone + NADH + 5 H(+)(in) = a quinol + NAD(+) + 4 H(+)(out)</text>
        <dbReference type="Rhea" id="RHEA:57888"/>
        <dbReference type="ChEBI" id="CHEBI:15378"/>
        <dbReference type="ChEBI" id="CHEBI:24646"/>
        <dbReference type="ChEBI" id="CHEBI:57540"/>
        <dbReference type="ChEBI" id="CHEBI:57945"/>
        <dbReference type="ChEBI" id="CHEBI:132124"/>
    </reaction>
</comment>
<comment type="subunit">
    <text evidence="1">NDH-1 is composed of 14 different subunits. Subunits NuoA, H, J, K, L, M, N constitute the membrane sector of the complex.</text>
</comment>
<comment type="subcellular location">
    <subcellularLocation>
        <location evidence="1">Cell inner membrane</location>
        <topology evidence="1">Multi-pass membrane protein</topology>
    </subcellularLocation>
</comment>
<comment type="similarity">
    <text evidence="1">Belongs to the complex I subunit 1 family.</text>
</comment>
<organism>
    <name type="scientific">Methylococcus capsulatus (strain ATCC 33009 / NCIMB 11132 / Bath)</name>
    <dbReference type="NCBI Taxonomy" id="243233"/>
    <lineage>
        <taxon>Bacteria</taxon>
        <taxon>Pseudomonadati</taxon>
        <taxon>Pseudomonadota</taxon>
        <taxon>Gammaproteobacteria</taxon>
        <taxon>Methylococcales</taxon>
        <taxon>Methylococcaceae</taxon>
        <taxon>Methylococcus</taxon>
    </lineage>
</organism>
<accession>Q608Y3</accession>
<gene>
    <name evidence="1" type="primary">nuoH</name>
    <name type="ordered locus">MCA1353</name>
</gene>
<name>NUOH_METCA</name>
<reference key="1">
    <citation type="journal article" date="2004" name="PLoS Biol.">
        <title>Genomic insights into methanotrophy: the complete genome sequence of Methylococcus capsulatus (Bath).</title>
        <authorList>
            <person name="Ward N.L."/>
            <person name="Larsen O."/>
            <person name="Sakwa J."/>
            <person name="Bruseth L."/>
            <person name="Khouri H.M."/>
            <person name="Durkin A.S."/>
            <person name="Dimitrov G."/>
            <person name="Jiang L."/>
            <person name="Scanlan D."/>
            <person name="Kang K.H."/>
            <person name="Lewis M.R."/>
            <person name="Nelson K.E."/>
            <person name="Methe B.A."/>
            <person name="Wu M."/>
            <person name="Heidelberg J.F."/>
            <person name="Paulsen I.T."/>
            <person name="Fouts D.E."/>
            <person name="Ravel J."/>
            <person name="Tettelin H."/>
            <person name="Ren Q."/>
            <person name="Read T.D."/>
            <person name="DeBoy R.T."/>
            <person name="Seshadri R."/>
            <person name="Salzberg S.L."/>
            <person name="Jensen H.B."/>
            <person name="Birkeland N.K."/>
            <person name="Nelson W.C."/>
            <person name="Dodson R.J."/>
            <person name="Grindhaug S.H."/>
            <person name="Holt I.E."/>
            <person name="Eidhammer I."/>
            <person name="Jonasen I."/>
            <person name="Vanaken S."/>
            <person name="Utterback T.R."/>
            <person name="Feldblyum T.V."/>
            <person name="Fraser C.M."/>
            <person name="Lillehaug J.R."/>
            <person name="Eisen J.A."/>
        </authorList>
    </citation>
    <scope>NUCLEOTIDE SEQUENCE [LARGE SCALE GENOMIC DNA]</scope>
    <source>
        <strain>ATCC 33009 / NCIMB 11132 / Bath</strain>
    </source>
</reference>